<feature type="chain" id="PRO_0000067303" description="Leucoanthocyanidin dioxygenase">
    <location>
        <begin position="1"/>
        <end position="430"/>
    </location>
</feature>
<feature type="domain" description="Fe2OG dioxygenase" evidence="3">
    <location>
        <begin position="212"/>
        <end position="311"/>
    </location>
</feature>
<feature type="region of interest" description="Disordered" evidence="4">
    <location>
        <begin position="376"/>
        <end position="430"/>
    </location>
</feature>
<feature type="compositionally biased region" description="Basic and acidic residues" evidence="4">
    <location>
        <begin position="376"/>
        <end position="407"/>
    </location>
</feature>
<feature type="compositionally biased region" description="Basic and acidic residues" evidence="4">
    <location>
        <begin position="415"/>
        <end position="430"/>
    </location>
</feature>
<feature type="binding site" evidence="3">
    <location>
        <position position="236"/>
    </location>
    <ligand>
        <name>Fe cation</name>
        <dbReference type="ChEBI" id="CHEBI:24875"/>
    </ligand>
</feature>
<feature type="binding site" evidence="3">
    <location>
        <position position="238"/>
    </location>
    <ligand>
        <name>Fe cation</name>
        <dbReference type="ChEBI" id="CHEBI:24875"/>
    </ligand>
</feature>
<feature type="binding site" evidence="3">
    <location>
        <position position="292"/>
    </location>
    <ligand>
        <name>Fe cation</name>
        <dbReference type="ChEBI" id="CHEBI:24875"/>
    </ligand>
</feature>
<reference key="1">
    <citation type="journal article" date="1993" name="Plant Mol. Biol.">
        <title>The petunia homologue of the Antirrhinum majus candi and Zea mays A2 flavonoid genes; homology to flavanone 3-hydroxylase and ethylene-forming enzyme.</title>
        <authorList>
            <person name="Weiss D."/>
            <person name="van der Luit A.H."/>
            <person name="Kroon J.T.M."/>
            <person name="Mol J.N.M."/>
            <person name="Kooter J.M."/>
        </authorList>
    </citation>
    <scope>NUCLEOTIDE SEQUENCE [MRNA]</scope>
    <source>
        <strain>cv. Violet 26</strain>
        <tissue>Corolla</tissue>
    </source>
</reference>
<organism>
    <name type="scientific">Petunia hybrida</name>
    <name type="common">Petunia</name>
    <dbReference type="NCBI Taxonomy" id="4102"/>
    <lineage>
        <taxon>Eukaryota</taxon>
        <taxon>Viridiplantae</taxon>
        <taxon>Streptophyta</taxon>
        <taxon>Embryophyta</taxon>
        <taxon>Tracheophyta</taxon>
        <taxon>Spermatophyta</taxon>
        <taxon>Magnoliopsida</taxon>
        <taxon>eudicotyledons</taxon>
        <taxon>Gunneridae</taxon>
        <taxon>Pentapetalae</taxon>
        <taxon>asterids</taxon>
        <taxon>lamiids</taxon>
        <taxon>Solanales</taxon>
        <taxon>Solanaceae</taxon>
        <taxon>Petunioideae</taxon>
        <taxon>Petunia</taxon>
    </lineage>
</organism>
<keyword id="KW-0223">Dioxygenase</keyword>
<keyword id="KW-0284">Flavonoid biosynthesis</keyword>
<keyword id="KW-0408">Iron</keyword>
<keyword id="KW-0479">Metal-binding</keyword>
<keyword id="KW-0560">Oxidoreductase</keyword>
<keyword id="KW-0847">Vitamin C</keyword>
<comment type="function">
    <text>Oxidation of leucoanthocyanidins into anthocyanidins.</text>
</comment>
<comment type="catalytic activity">
    <reaction evidence="2">
        <text>a (2R,3S,4S)-leucoanthocyanidin + 2-oxoglutarate + O2 = a 4-H-anthocyanidin with a 3-hydroxy group + succinate + CO2 + 2 H2O</text>
        <dbReference type="Rhea" id="RHEA:54432"/>
        <dbReference type="ChEBI" id="CHEBI:15377"/>
        <dbReference type="ChEBI" id="CHEBI:15379"/>
        <dbReference type="ChEBI" id="CHEBI:16526"/>
        <dbReference type="ChEBI" id="CHEBI:16810"/>
        <dbReference type="ChEBI" id="CHEBI:30031"/>
        <dbReference type="ChEBI" id="CHEBI:138176"/>
        <dbReference type="ChEBI" id="CHEBI:138177"/>
        <dbReference type="EC" id="1.14.20.4"/>
    </reaction>
</comment>
<comment type="cofactor">
    <cofactor evidence="1">
        <name>Fe cation</name>
        <dbReference type="ChEBI" id="CHEBI:24875"/>
    </cofactor>
    <text evidence="1">Binds 1 Fe cation per subunit.</text>
</comment>
<comment type="cofactor">
    <cofactor evidence="1">
        <name>L-ascorbate</name>
        <dbReference type="ChEBI" id="CHEBI:38290"/>
    </cofactor>
    <text evidence="1">Binds 1 ascorbate molecule per subunit.</text>
</comment>
<comment type="pathway">
    <text>Pigment biosynthesis; anthocyanin biosynthesis.</text>
</comment>
<comment type="tissue specificity">
    <text>Predominantly expressed in corollas and at lower levels in anthers.</text>
</comment>
<comment type="induction">
    <text>By gibberellic acid (GA).</text>
</comment>
<comment type="similarity">
    <text evidence="5">Belongs to the iron/ascorbate-dependent oxidoreductase family.</text>
</comment>
<sequence>MVNAVVTTPSRVESLAKSGIQAIPKEYVRPQEELNGIGNIFEEEKKDEGPQVPTIDLKEIDSEDKEIREKCHQLKKAAMEWGVMHLVNHGISDELINRVKVAGETFFDQPVEEKEKYANDQANGNVQGYGSKLANSACGQLEWEDYFFHCAFPEDKRDLSIWPKNPTDYTPATSEYAKQIRALATKILTVLSIGLGLEEGRLEKEVGGMEDLLLQMKINYYPKCPQPELALGVEAHTDVSALTFILHNMVPGLQLFYEGQWVTAKCVPNSIIMHIGDTIEILSNGKYKSILHRGVVNKEKVRFSWAIFCEPPKEKIILKPLPETVTEAEPPRFPPRTFAQHMAHKLFRKDDKDAAVEHKVFNEDELDTAAEHKVLKKDNQDAVAENKDIKEDEQCGPAEHKDIKEDGQGAAAENKVFKENNQDVAAEESK</sequence>
<evidence type="ECO:0000250" key="1"/>
<evidence type="ECO:0000250" key="2">
    <source>
        <dbReference type="UniProtKB" id="Q96323"/>
    </source>
</evidence>
<evidence type="ECO:0000255" key="3">
    <source>
        <dbReference type="PROSITE-ProRule" id="PRU00805"/>
    </source>
</evidence>
<evidence type="ECO:0000256" key="4">
    <source>
        <dbReference type="SAM" id="MobiDB-lite"/>
    </source>
</evidence>
<evidence type="ECO:0000305" key="5"/>
<name>LDOX_PETHY</name>
<accession>P51092</accession>
<gene>
    <name type="primary">ANT17</name>
</gene>
<protein>
    <recommendedName>
        <fullName>Leucoanthocyanidin dioxygenase</fullName>
        <shortName>LDOX</shortName>
        <shortName>Leucocyanidin oxygenase</shortName>
        <ecNumber evidence="2">1.14.20.4</ecNumber>
    </recommendedName>
    <alternativeName>
        <fullName>Leucoanthocyanidin hydroxylase</fullName>
    </alternativeName>
</protein>
<dbReference type="EC" id="1.14.20.4" evidence="2"/>
<dbReference type="EMBL" id="X70786">
    <property type="status" value="NOT_ANNOTATED_CDS"/>
    <property type="molecule type" value="mRNA"/>
</dbReference>
<dbReference type="PIR" id="S36233">
    <property type="entry name" value="S36233"/>
</dbReference>
<dbReference type="SMR" id="P51092"/>
<dbReference type="UniPathway" id="UPA00009"/>
<dbReference type="GO" id="GO:0031418">
    <property type="term" value="F:L-ascorbic acid binding"/>
    <property type="evidence" value="ECO:0007669"/>
    <property type="project" value="UniProtKB-KW"/>
</dbReference>
<dbReference type="GO" id="GO:0050589">
    <property type="term" value="F:leucocyanidin oxygenase activity"/>
    <property type="evidence" value="ECO:0007669"/>
    <property type="project" value="UniProtKB-EC"/>
</dbReference>
<dbReference type="GO" id="GO:0046872">
    <property type="term" value="F:metal ion binding"/>
    <property type="evidence" value="ECO:0007669"/>
    <property type="project" value="UniProtKB-KW"/>
</dbReference>
<dbReference type="GO" id="GO:0009718">
    <property type="term" value="P:anthocyanin-containing compound biosynthetic process"/>
    <property type="evidence" value="ECO:0007669"/>
    <property type="project" value="UniProtKB-UniPathway"/>
</dbReference>
<dbReference type="GO" id="GO:0009805">
    <property type="term" value="P:coumarin biosynthetic process"/>
    <property type="evidence" value="ECO:0007669"/>
    <property type="project" value="UniProtKB-ARBA"/>
</dbReference>
<dbReference type="GO" id="GO:0002238">
    <property type="term" value="P:response to molecule of fungal origin"/>
    <property type="evidence" value="ECO:0007669"/>
    <property type="project" value="UniProtKB-ARBA"/>
</dbReference>
<dbReference type="FunFam" id="2.60.120.330:FF:000009">
    <property type="entry name" value="Flavonol synthase"/>
    <property type="match status" value="1"/>
</dbReference>
<dbReference type="Gene3D" id="2.60.120.330">
    <property type="entry name" value="B-lactam Antibiotic, Isopenicillin N Synthase, Chain"/>
    <property type="match status" value="1"/>
</dbReference>
<dbReference type="InterPro" id="IPR026992">
    <property type="entry name" value="DIOX_N"/>
</dbReference>
<dbReference type="InterPro" id="IPR044861">
    <property type="entry name" value="IPNS-like_FE2OG_OXY"/>
</dbReference>
<dbReference type="InterPro" id="IPR027443">
    <property type="entry name" value="IPNS-like_sf"/>
</dbReference>
<dbReference type="InterPro" id="IPR005123">
    <property type="entry name" value="Oxoglu/Fe-dep_dioxygenase_dom"/>
</dbReference>
<dbReference type="InterPro" id="IPR050295">
    <property type="entry name" value="Plant_2OG-oxidoreductases"/>
</dbReference>
<dbReference type="PANTHER" id="PTHR47991">
    <property type="entry name" value="OXOGLUTARATE/IRON-DEPENDENT DIOXYGENASE"/>
    <property type="match status" value="1"/>
</dbReference>
<dbReference type="Pfam" id="PF03171">
    <property type="entry name" value="2OG-FeII_Oxy"/>
    <property type="match status" value="1"/>
</dbReference>
<dbReference type="Pfam" id="PF14226">
    <property type="entry name" value="DIOX_N"/>
    <property type="match status" value="1"/>
</dbReference>
<dbReference type="SUPFAM" id="SSF51197">
    <property type="entry name" value="Clavaminate synthase-like"/>
    <property type="match status" value="1"/>
</dbReference>
<dbReference type="PROSITE" id="PS51471">
    <property type="entry name" value="FE2OG_OXY"/>
    <property type="match status" value="1"/>
</dbReference>
<proteinExistence type="evidence at transcript level"/>